<dbReference type="EC" id="3.2.2.27" evidence="1"/>
<dbReference type="EMBL" id="CP001056">
    <property type="protein sequence ID" value="ACD22962.1"/>
    <property type="molecule type" value="Genomic_DNA"/>
</dbReference>
<dbReference type="SMR" id="B2TQZ9"/>
<dbReference type="KEGG" id="cbk:CLL_A3379"/>
<dbReference type="PATRIC" id="fig|935198.13.peg.3346"/>
<dbReference type="HOGENOM" id="CLU_032162_3_1_9"/>
<dbReference type="Proteomes" id="UP000001195">
    <property type="component" value="Chromosome"/>
</dbReference>
<dbReference type="GO" id="GO:0005737">
    <property type="term" value="C:cytoplasm"/>
    <property type="evidence" value="ECO:0007669"/>
    <property type="project" value="UniProtKB-SubCell"/>
</dbReference>
<dbReference type="GO" id="GO:0004844">
    <property type="term" value="F:uracil DNA N-glycosylase activity"/>
    <property type="evidence" value="ECO:0007669"/>
    <property type="project" value="UniProtKB-UniRule"/>
</dbReference>
<dbReference type="GO" id="GO:0097510">
    <property type="term" value="P:base-excision repair, AP site formation via deaminated base removal"/>
    <property type="evidence" value="ECO:0007669"/>
    <property type="project" value="TreeGrafter"/>
</dbReference>
<dbReference type="CDD" id="cd10027">
    <property type="entry name" value="UDG-F1-like"/>
    <property type="match status" value="1"/>
</dbReference>
<dbReference type="FunFam" id="3.40.470.10:FF:000001">
    <property type="entry name" value="Uracil-DNA glycosylase"/>
    <property type="match status" value="1"/>
</dbReference>
<dbReference type="Gene3D" id="3.40.470.10">
    <property type="entry name" value="Uracil-DNA glycosylase-like domain"/>
    <property type="match status" value="1"/>
</dbReference>
<dbReference type="HAMAP" id="MF_00148">
    <property type="entry name" value="UDG"/>
    <property type="match status" value="1"/>
</dbReference>
<dbReference type="InterPro" id="IPR002043">
    <property type="entry name" value="UDG_fam1"/>
</dbReference>
<dbReference type="InterPro" id="IPR018085">
    <property type="entry name" value="Ura-DNA_Glyclase_AS"/>
</dbReference>
<dbReference type="InterPro" id="IPR005122">
    <property type="entry name" value="Uracil-DNA_glycosylase-like"/>
</dbReference>
<dbReference type="InterPro" id="IPR036895">
    <property type="entry name" value="Uracil-DNA_glycosylase-like_sf"/>
</dbReference>
<dbReference type="NCBIfam" id="NF003588">
    <property type="entry name" value="PRK05254.1-1"/>
    <property type="match status" value="1"/>
</dbReference>
<dbReference type="NCBIfam" id="NF003589">
    <property type="entry name" value="PRK05254.1-2"/>
    <property type="match status" value="1"/>
</dbReference>
<dbReference type="NCBIfam" id="NF003591">
    <property type="entry name" value="PRK05254.1-4"/>
    <property type="match status" value="1"/>
</dbReference>
<dbReference type="NCBIfam" id="NF003592">
    <property type="entry name" value="PRK05254.1-5"/>
    <property type="match status" value="1"/>
</dbReference>
<dbReference type="NCBIfam" id="TIGR00628">
    <property type="entry name" value="ung"/>
    <property type="match status" value="1"/>
</dbReference>
<dbReference type="PANTHER" id="PTHR11264">
    <property type="entry name" value="URACIL-DNA GLYCOSYLASE"/>
    <property type="match status" value="1"/>
</dbReference>
<dbReference type="PANTHER" id="PTHR11264:SF0">
    <property type="entry name" value="URACIL-DNA GLYCOSYLASE"/>
    <property type="match status" value="1"/>
</dbReference>
<dbReference type="Pfam" id="PF03167">
    <property type="entry name" value="UDG"/>
    <property type="match status" value="1"/>
</dbReference>
<dbReference type="SMART" id="SM00986">
    <property type="entry name" value="UDG"/>
    <property type="match status" value="1"/>
</dbReference>
<dbReference type="SMART" id="SM00987">
    <property type="entry name" value="UreE_C"/>
    <property type="match status" value="1"/>
</dbReference>
<dbReference type="SUPFAM" id="SSF52141">
    <property type="entry name" value="Uracil-DNA glycosylase-like"/>
    <property type="match status" value="1"/>
</dbReference>
<dbReference type="PROSITE" id="PS00130">
    <property type="entry name" value="U_DNA_GLYCOSYLASE"/>
    <property type="match status" value="1"/>
</dbReference>
<name>UNG_CLOBB</name>
<gene>
    <name evidence="1" type="primary">ung</name>
    <name type="ordered locus">CLL_A3379</name>
</gene>
<reference key="1">
    <citation type="submission" date="2008-04" db="EMBL/GenBank/DDBJ databases">
        <title>Complete sequence of Clostridium botulinum strain Eklund.</title>
        <authorList>
            <person name="Brinkac L.M."/>
            <person name="Brown J.L."/>
            <person name="Bruce D."/>
            <person name="Detter C."/>
            <person name="Munk C."/>
            <person name="Smith L.A."/>
            <person name="Smith T.J."/>
            <person name="Sutton G."/>
            <person name="Brettin T.S."/>
        </authorList>
    </citation>
    <scope>NUCLEOTIDE SEQUENCE [LARGE SCALE GENOMIC DNA]</scope>
    <source>
        <strain>Eklund 17B / Type B</strain>
    </source>
</reference>
<accession>B2TQZ9</accession>
<organism>
    <name type="scientific">Clostridium botulinum (strain Eklund 17B / Type B)</name>
    <dbReference type="NCBI Taxonomy" id="935198"/>
    <lineage>
        <taxon>Bacteria</taxon>
        <taxon>Bacillati</taxon>
        <taxon>Bacillota</taxon>
        <taxon>Clostridia</taxon>
        <taxon>Eubacteriales</taxon>
        <taxon>Clostridiaceae</taxon>
        <taxon>Clostridium</taxon>
    </lineage>
</organism>
<protein>
    <recommendedName>
        <fullName evidence="1">Uracil-DNA glycosylase</fullName>
        <shortName evidence="1">UDG</shortName>
        <ecNumber evidence="1">3.2.2.27</ecNumber>
    </recommendedName>
</protein>
<sequence>MNNILKNDWNNYIGNEFEKDYYLKLRKNLAQEYKTKTIYPDMYNIFNALHYTAFDDVKVVILGQDPYHGPNQAHGLSFSVNPGVRTPPSLLNIYKELKDDIGCYIPNNGYLKKWADQGVLLLNTVLTVRAGEANSHKNIGWQIFTDNIIKVLNTREKPIVFILWGNNAIRKEELITNPKHHIIKSVHPSPLSASRGFFGSKPFSKTNEFLKNDNEIPIDWQIENL</sequence>
<comment type="function">
    <text evidence="1">Excises uracil residues from the DNA which can arise as a result of misincorporation of dUMP residues by DNA polymerase or due to deamination of cytosine.</text>
</comment>
<comment type="catalytic activity">
    <reaction evidence="1">
        <text>Hydrolyzes single-stranded DNA or mismatched double-stranded DNA and polynucleotides, releasing free uracil.</text>
        <dbReference type="EC" id="3.2.2.27"/>
    </reaction>
</comment>
<comment type="subcellular location">
    <subcellularLocation>
        <location evidence="1">Cytoplasm</location>
    </subcellularLocation>
</comment>
<comment type="similarity">
    <text evidence="1">Belongs to the uracil-DNA glycosylase (UDG) superfamily. UNG family.</text>
</comment>
<evidence type="ECO:0000255" key="1">
    <source>
        <dbReference type="HAMAP-Rule" id="MF_00148"/>
    </source>
</evidence>
<proteinExistence type="inferred from homology"/>
<keyword id="KW-0963">Cytoplasm</keyword>
<keyword id="KW-0227">DNA damage</keyword>
<keyword id="KW-0234">DNA repair</keyword>
<keyword id="KW-0378">Hydrolase</keyword>
<feature type="chain" id="PRO_1000096573" description="Uracil-DNA glycosylase">
    <location>
        <begin position="1"/>
        <end position="225"/>
    </location>
</feature>
<feature type="active site" description="Proton acceptor" evidence="1">
    <location>
        <position position="65"/>
    </location>
</feature>